<dbReference type="EMBL" id="AK048123">
    <property type="protein sequence ID" value="BAC33250.1"/>
    <property type="molecule type" value="mRNA"/>
</dbReference>
<dbReference type="EMBL" id="AK079116">
    <property type="protein sequence ID" value="BAC37547.1"/>
    <property type="molecule type" value="mRNA"/>
</dbReference>
<dbReference type="EMBL" id="BC024945">
    <property type="protein sequence ID" value="AAH24945.1"/>
    <property type="status" value="ALT_INIT"/>
    <property type="molecule type" value="mRNA"/>
</dbReference>
<dbReference type="EMBL" id="BC071241">
    <property type="protein sequence ID" value="AAH71241.1"/>
    <property type="molecule type" value="mRNA"/>
</dbReference>
<dbReference type="CCDS" id="CCDS48266.1"/>
<dbReference type="RefSeq" id="NP_001074650.1">
    <property type="nucleotide sequence ID" value="NM_001081181.3"/>
</dbReference>
<dbReference type="BioGRID" id="212663">
    <property type="interactions" value="2"/>
</dbReference>
<dbReference type="FunCoup" id="Q8BHE8">
    <property type="interactions" value="1201"/>
</dbReference>
<dbReference type="STRING" id="10090.ENSMUSP00000027114"/>
<dbReference type="iPTMnet" id="Q8BHE8"/>
<dbReference type="PhosphoSitePlus" id="Q8BHE8"/>
<dbReference type="SwissPalm" id="Q8BHE8"/>
<dbReference type="jPOST" id="Q8BHE8"/>
<dbReference type="PaxDb" id="10090-ENSMUSP00000027114"/>
<dbReference type="PeptideAtlas" id="Q8BHE8"/>
<dbReference type="ProteomicsDB" id="292003"/>
<dbReference type="Pumba" id="Q8BHE8"/>
<dbReference type="Antibodypedia" id="34082">
    <property type="antibodies" value="110 antibodies from 19 providers"/>
</dbReference>
<dbReference type="Ensembl" id="ENSMUST00000027114.6">
    <property type="protein sequence ID" value="ENSMUSP00000027114.6"/>
    <property type="gene ID" value="ENSMUSG00000025971.7"/>
</dbReference>
<dbReference type="GeneID" id="68115"/>
<dbReference type="KEGG" id="mmu:68115"/>
<dbReference type="UCSC" id="uc007bbc.2">
    <property type="organism name" value="mouse"/>
</dbReference>
<dbReference type="AGR" id="MGI:1915365"/>
<dbReference type="CTD" id="79568"/>
<dbReference type="MGI" id="MGI:1915365">
    <property type="gene designation" value="Maip1"/>
</dbReference>
<dbReference type="VEuPathDB" id="HostDB:ENSMUSG00000025971"/>
<dbReference type="eggNOG" id="ENOG502QR8E">
    <property type="taxonomic scope" value="Eukaryota"/>
</dbReference>
<dbReference type="GeneTree" id="ENSGT00390000004145"/>
<dbReference type="HOGENOM" id="CLU_083348_0_0_1"/>
<dbReference type="InParanoid" id="Q8BHE8"/>
<dbReference type="OMA" id="SILMCFW"/>
<dbReference type="OrthoDB" id="7249367at2759"/>
<dbReference type="PhylomeDB" id="Q8BHE8"/>
<dbReference type="TreeFam" id="TF323801"/>
<dbReference type="Reactome" id="R-MMU-8949664">
    <property type="pathway name" value="Processing of SMDT1"/>
</dbReference>
<dbReference type="BioGRID-ORCS" id="68115">
    <property type="hits" value="4 hits in 75 CRISPR screens"/>
</dbReference>
<dbReference type="ChiTaRS" id="Maip1">
    <property type="organism name" value="mouse"/>
</dbReference>
<dbReference type="PRO" id="PR:Q8BHE8"/>
<dbReference type="Proteomes" id="UP000000589">
    <property type="component" value="Chromosome 1"/>
</dbReference>
<dbReference type="RNAct" id="Q8BHE8">
    <property type="molecule type" value="protein"/>
</dbReference>
<dbReference type="Bgee" id="ENSMUSG00000025971">
    <property type="expression patterns" value="Expressed in floor plate of midbrain and 261 other cell types or tissues"/>
</dbReference>
<dbReference type="GO" id="GO:0005759">
    <property type="term" value="C:mitochondrial matrix"/>
    <property type="evidence" value="ECO:0000250"/>
    <property type="project" value="UniProtKB"/>
</dbReference>
<dbReference type="GO" id="GO:0036444">
    <property type="term" value="P:calcium import into the mitochondrion"/>
    <property type="evidence" value="ECO:0000250"/>
    <property type="project" value="UniProtKB"/>
</dbReference>
<dbReference type="GO" id="GO:0051560">
    <property type="term" value="P:mitochondrial calcium ion homeostasis"/>
    <property type="evidence" value="ECO:0000250"/>
    <property type="project" value="UniProtKB"/>
</dbReference>
<dbReference type="GO" id="GO:0051204">
    <property type="term" value="P:protein insertion into mitochondrial membrane"/>
    <property type="evidence" value="ECO:0000250"/>
    <property type="project" value="UniProtKB"/>
</dbReference>
<dbReference type="PANTHER" id="PTHR13333">
    <property type="entry name" value="M-AAA PROTEASE-INTERACTING PROTEIN 1, MITOCHONDRIAL"/>
    <property type="match status" value="1"/>
</dbReference>
<dbReference type="PANTHER" id="PTHR13333:SF5">
    <property type="entry name" value="M-AAA PROTEASE-INTERACTING PROTEIN 1, MITOCHONDRIAL"/>
    <property type="match status" value="1"/>
</dbReference>
<feature type="transit peptide" description="Mitochondrion" evidence="2">
    <location>
        <begin position="1"/>
        <end position="96"/>
    </location>
</feature>
<feature type="chain" id="PRO_0000301946" description="m-AAA protease-interacting protein 1, mitochondrial">
    <location>
        <begin position="97"/>
        <end position="291"/>
    </location>
</feature>
<gene>
    <name evidence="4 6" type="primary">Maip1</name>
</gene>
<evidence type="ECO:0000250" key="1">
    <source>
        <dbReference type="UniProtKB" id="Q8WWC4"/>
    </source>
</evidence>
<evidence type="ECO:0000255" key="2"/>
<evidence type="ECO:0000269" key="3">
    <source>
    </source>
</evidence>
<evidence type="ECO:0000303" key="4">
    <source>
    </source>
</evidence>
<evidence type="ECO:0000305" key="5"/>
<evidence type="ECO:0000312" key="6">
    <source>
        <dbReference type="MGI" id="MGI:1915365"/>
    </source>
</evidence>
<proteinExistence type="evidence at protein level"/>
<accession>Q8BHE8</accession>
<accession>Q8R3N9</accession>
<organism>
    <name type="scientific">Mus musculus</name>
    <name type="common">Mouse</name>
    <dbReference type="NCBI Taxonomy" id="10090"/>
    <lineage>
        <taxon>Eukaryota</taxon>
        <taxon>Metazoa</taxon>
        <taxon>Chordata</taxon>
        <taxon>Craniata</taxon>
        <taxon>Vertebrata</taxon>
        <taxon>Euteleostomi</taxon>
        <taxon>Mammalia</taxon>
        <taxon>Eutheria</taxon>
        <taxon>Euarchontoglires</taxon>
        <taxon>Glires</taxon>
        <taxon>Rodentia</taxon>
        <taxon>Myomorpha</taxon>
        <taxon>Muroidea</taxon>
        <taxon>Muridae</taxon>
        <taxon>Murinae</taxon>
        <taxon>Mus</taxon>
        <taxon>Mus</taxon>
    </lineage>
</organism>
<sequence>MALAARLLPLPLLSRPLPGPVTRLRTLGSTEVRLTLTEICCLCRRRLGSSAAPIPRYTRAWTSPALRSWSSRRSLLGRVEHPPALASLPASPSRSYSTEEQPQQRQRTRMIILGFSNPINWVRTRIYAFLIWAYFDKEFSIAEFSEGAKQAFAYVSKLLSQCKFDLLEELVAKEVLQILKEKVTSLSDNHKNALAADIDDIVYTSTGDISIYYDEKGRKFVNILMCFWYLTSANIPSESLSGANVFQVKLGDQSVETKQLLSASYEFQREFTQGVKPDWTIARIEHSKLLE</sequence>
<protein>
    <recommendedName>
        <fullName evidence="4">m-AAA protease-interacting protein 1, mitochondrial</fullName>
    </recommendedName>
    <alternativeName>
        <fullName evidence="6">Matrix AAA peptidase-interacting protein 1</fullName>
    </alternativeName>
</protein>
<keyword id="KW-0496">Mitochondrion</keyword>
<keyword id="KW-1185">Reference proteome</keyword>
<keyword id="KW-0809">Transit peptide</keyword>
<comment type="function">
    <text evidence="1">Promotes sorting of SMDT1/EMRE in mitochondria by ensuring its maturation. Interacts with the transit peptide region of SMDT1/EMRE precursor protein in the mitochondrial matrix, leading to protect it against protein degradation by YME1L1, thereby ensuring SMDT1/EMRE maturation by the mitochondrial processing peptidase (PMPCA and PMPCB).</text>
</comment>
<comment type="subunit">
    <text evidence="1 3">Interacts with AFG3L2 (PubMed:27642048). Interacts with SPG7 (By similarity). Interacts with SMDT1/EMRE (via the N-terminal transit peptide); interaction is direct and takes place before maturation of SMDT1/EMRE (By similarity).</text>
</comment>
<comment type="subcellular location">
    <subcellularLocation>
        <location evidence="1">Mitochondrion matrix</location>
    </subcellularLocation>
</comment>
<comment type="sequence caution" evidence="5">
    <conflict type="erroneous initiation">
        <sequence resource="EMBL-CDS" id="AAH24945"/>
    </conflict>
</comment>
<name>MAIP1_MOUSE</name>
<reference key="1">
    <citation type="journal article" date="2005" name="Science">
        <title>The transcriptional landscape of the mammalian genome.</title>
        <authorList>
            <person name="Carninci P."/>
            <person name="Kasukawa T."/>
            <person name="Katayama S."/>
            <person name="Gough J."/>
            <person name="Frith M.C."/>
            <person name="Maeda N."/>
            <person name="Oyama R."/>
            <person name="Ravasi T."/>
            <person name="Lenhard B."/>
            <person name="Wells C."/>
            <person name="Kodzius R."/>
            <person name="Shimokawa K."/>
            <person name="Bajic V.B."/>
            <person name="Brenner S.E."/>
            <person name="Batalov S."/>
            <person name="Forrest A.R."/>
            <person name="Zavolan M."/>
            <person name="Davis M.J."/>
            <person name="Wilming L.G."/>
            <person name="Aidinis V."/>
            <person name="Allen J.E."/>
            <person name="Ambesi-Impiombato A."/>
            <person name="Apweiler R."/>
            <person name="Aturaliya R.N."/>
            <person name="Bailey T.L."/>
            <person name="Bansal M."/>
            <person name="Baxter L."/>
            <person name="Beisel K.W."/>
            <person name="Bersano T."/>
            <person name="Bono H."/>
            <person name="Chalk A.M."/>
            <person name="Chiu K.P."/>
            <person name="Choudhary V."/>
            <person name="Christoffels A."/>
            <person name="Clutterbuck D.R."/>
            <person name="Crowe M.L."/>
            <person name="Dalla E."/>
            <person name="Dalrymple B.P."/>
            <person name="de Bono B."/>
            <person name="Della Gatta G."/>
            <person name="di Bernardo D."/>
            <person name="Down T."/>
            <person name="Engstrom P."/>
            <person name="Fagiolini M."/>
            <person name="Faulkner G."/>
            <person name="Fletcher C.F."/>
            <person name="Fukushima T."/>
            <person name="Furuno M."/>
            <person name="Futaki S."/>
            <person name="Gariboldi M."/>
            <person name="Georgii-Hemming P."/>
            <person name="Gingeras T.R."/>
            <person name="Gojobori T."/>
            <person name="Green R.E."/>
            <person name="Gustincich S."/>
            <person name="Harbers M."/>
            <person name="Hayashi Y."/>
            <person name="Hensch T.K."/>
            <person name="Hirokawa N."/>
            <person name="Hill D."/>
            <person name="Huminiecki L."/>
            <person name="Iacono M."/>
            <person name="Ikeo K."/>
            <person name="Iwama A."/>
            <person name="Ishikawa T."/>
            <person name="Jakt M."/>
            <person name="Kanapin A."/>
            <person name="Katoh M."/>
            <person name="Kawasawa Y."/>
            <person name="Kelso J."/>
            <person name="Kitamura H."/>
            <person name="Kitano H."/>
            <person name="Kollias G."/>
            <person name="Krishnan S.P."/>
            <person name="Kruger A."/>
            <person name="Kummerfeld S.K."/>
            <person name="Kurochkin I.V."/>
            <person name="Lareau L.F."/>
            <person name="Lazarevic D."/>
            <person name="Lipovich L."/>
            <person name="Liu J."/>
            <person name="Liuni S."/>
            <person name="McWilliam S."/>
            <person name="Madan Babu M."/>
            <person name="Madera M."/>
            <person name="Marchionni L."/>
            <person name="Matsuda H."/>
            <person name="Matsuzawa S."/>
            <person name="Miki H."/>
            <person name="Mignone F."/>
            <person name="Miyake S."/>
            <person name="Morris K."/>
            <person name="Mottagui-Tabar S."/>
            <person name="Mulder N."/>
            <person name="Nakano N."/>
            <person name="Nakauchi H."/>
            <person name="Ng P."/>
            <person name="Nilsson R."/>
            <person name="Nishiguchi S."/>
            <person name="Nishikawa S."/>
            <person name="Nori F."/>
            <person name="Ohara O."/>
            <person name="Okazaki Y."/>
            <person name="Orlando V."/>
            <person name="Pang K.C."/>
            <person name="Pavan W.J."/>
            <person name="Pavesi G."/>
            <person name="Pesole G."/>
            <person name="Petrovsky N."/>
            <person name="Piazza S."/>
            <person name="Reed J."/>
            <person name="Reid J.F."/>
            <person name="Ring B.Z."/>
            <person name="Ringwald M."/>
            <person name="Rost B."/>
            <person name="Ruan Y."/>
            <person name="Salzberg S.L."/>
            <person name="Sandelin A."/>
            <person name="Schneider C."/>
            <person name="Schoenbach C."/>
            <person name="Sekiguchi K."/>
            <person name="Semple C.A."/>
            <person name="Seno S."/>
            <person name="Sessa L."/>
            <person name="Sheng Y."/>
            <person name="Shibata Y."/>
            <person name="Shimada H."/>
            <person name="Shimada K."/>
            <person name="Silva D."/>
            <person name="Sinclair B."/>
            <person name="Sperling S."/>
            <person name="Stupka E."/>
            <person name="Sugiura K."/>
            <person name="Sultana R."/>
            <person name="Takenaka Y."/>
            <person name="Taki K."/>
            <person name="Tammoja K."/>
            <person name="Tan S.L."/>
            <person name="Tang S."/>
            <person name="Taylor M.S."/>
            <person name="Tegner J."/>
            <person name="Teichmann S.A."/>
            <person name="Ueda H.R."/>
            <person name="van Nimwegen E."/>
            <person name="Verardo R."/>
            <person name="Wei C.L."/>
            <person name="Yagi K."/>
            <person name="Yamanishi H."/>
            <person name="Zabarovsky E."/>
            <person name="Zhu S."/>
            <person name="Zimmer A."/>
            <person name="Hide W."/>
            <person name="Bult C."/>
            <person name="Grimmond S.M."/>
            <person name="Teasdale R.D."/>
            <person name="Liu E.T."/>
            <person name="Brusic V."/>
            <person name="Quackenbush J."/>
            <person name="Wahlestedt C."/>
            <person name="Mattick J.S."/>
            <person name="Hume D.A."/>
            <person name="Kai C."/>
            <person name="Sasaki D."/>
            <person name="Tomaru Y."/>
            <person name="Fukuda S."/>
            <person name="Kanamori-Katayama M."/>
            <person name="Suzuki M."/>
            <person name="Aoki J."/>
            <person name="Arakawa T."/>
            <person name="Iida J."/>
            <person name="Imamura K."/>
            <person name="Itoh M."/>
            <person name="Kato T."/>
            <person name="Kawaji H."/>
            <person name="Kawagashira N."/>
            <person name="Kawashima T."/>
            <person name="Kojima M."/>
            <person name="Kondo S."/>
            <person name="Konno H."/>
            <person name="Nakano K."/>
            <person name="Ninomiya N."/>
            <person name="Nishio T."/>
            <person name="Okada M."/>
            <person name="Plessy C."/>
            <person name="Shibata K."/>
            <person name="Shiraki T."/>
            <person name="Suzuki S."/>
            <person name="Tagami M."/>
            <person name="Waki K."/>
            <person name="Watahiki A."/>
            <person name="Okamura-Oho Y."/>
            <person name="Suzuki H."/>
            <person name="Kawai J."/>
            <person name="Hayashizaki Y."/>
        </authorList>
    </citation>
    <scope>NUCLEOTIDE SEQUENCE [LARGE SCALE MRNA]</scope>
    <source>
        <strain>C57BL/6J</strain>
        <tissue>Embryo</tissue>
        <tissue>Head</tissue>
    </source>
</reference>
<reference key="2">
    <citation type="journal article" date="2004" name="Genome Res.">
        <title>The status, quality, and expansion of the NIH full-length cDNA project: the Mammalian Gene Collection (MGC).</title>
        <authorList>
            <consortium name="The MGC Project Team"/>
        </authorList>
    </citation>
    <scope>NUCLEOTIDE SEQUENCE [LARGE SCALE MRNA]</scope>
    <source>
        <strain>FVB/N</strain>
        <tissue>Liver</tissue>
        <tissue>Mammary tumor</tissue>
    </source>
</reference>
<reference key="3">
    <citation type="journal article" date="2010" name="Cell">
        <title>A tissue-specific atlas of mouse protein phosphorylation and expression.</title>
        <authorList>
            <person name="Huttlin E.L."/>
            <person name="Jedrychowski M.P."/>
            <person name="Elias J.E."/>
            <person name="Goswami T."/>
            <person name="Rad R."/>
            <person name="Beausoleil S.A."/>
            <person name="Villen J."/>
            <person name="Haas W."/>
            <person name="Sowa M.E."/>
            <person name="Gygi S.P."/>
        </authorList>
    </citation>
    <scope>IDENTIFICATION BY MASS SPECTROMETRY [LARGE SCALE ANALYSIS]</scope>
    <source>
        <tissue>Brain</tissue>
        <tissue>Brown adipose tissue</tissue>
        <tissue>Heart</tissue>
        <tissue>Kidney</tissue>
        <tissue>Liver</tissue>
        <tissue>Lung</tissue>
        <tissue>Pancreas</tissue>
        <tissue>Spleen</tissue>
        <tissue>Testis</tissue>
    </source>
</reference>
<reference key="4">
    <citation type="journal article" date="2016" name="Mol. Cell">
        <title>The m-AAA protease associated with neurodegeneration limits MCU activity in mitochondria.</title>
        <authorList>
            <person name="Koenig T."/>
            <person name="Troeder S.E."/>
            <person name="Bakka K."/>
            <person name="Korwitz A."/>
            <person name="Richter-Dennerlein R."/>
            <person name="Lampe P.A."/>
            <person name="Patron M."/>
            <person name="Muehlmeister M."/>
            <person name="Guerrero-Castillo S."/>
            <person name="Brandt U."/>
            <person name="Decker T."/>
            <person name="Lauria I."/>
            <person name="Paggio A."/>
            <person name="Rizzuto R."/>
            <person name="Rugarli E.I."/>
            <person name="De Stefani D."/>
            <person name="Langer T."/>
        </authorList>
    </citation>
    <scope>INTERACTION WITH AFG3L2</scope>
</reference>